<proteinExistence type="inferred from homology"/>
<name>3MGA_HAEIN</name>
<dbReference type="EC" id="3.2.2.20"/>
<dbReference type="EMBL" id="L42023">
    <property type="protein sequence ID" value="AAC22313.1"/>
    <property type="molecule type" value="Genomic_DNA"/>
</dbReference>
<dbReference type="PIR" id="G64084">
    <property type="entry name" value="G64084"/>
</dbReference>
<dbReference type="RefSeq" id="NP_438814.1">
    <property type="nucleotide sequence ID" value="NC_000907.1"/>
</dbReference>
<dbReference type="SMR" id="P44321"/>
<dbReference type="STRING" id="71421.HI_0654"/>
<dbReference type="EnsemblBacteria" id="AAC22313">
    <property type="protein sequence ID" value="AAC22313"/>
    <property type="gene ID" value="HI_0654"/>
</dbReference>
<dbReference type="KEGG" id="hin:HI_0654"/>
<dbReference type="PATRIC" id="fig|71421.8.peg.683"/>
<dbReference type="eggNOG" id="COG2818">
    <property type="taxonomic scope" value="Bacteria"/>
</dbReference>
<dbReference type="HOGENOM" id="CLU_083758_1_0_6"/>
<dbReference type="OrthoDB" id="9807664at2"/>
<dbReference type="PhylomeDB" id="P44321"/>
<dbReference type="BioCyc" id="HINF71421:G1GJ1-689-MONOMER"/>
<dbReference type="Proteomes" id="UP000000579">
    <property type="component" value="Chromosome"/>
</dbReference>
<dbReference type="GO" id="GO:0008725">
    <property type="term" value="F:DNA-3-methyladenine glycosylase activity"/>
    <property type="evidence" value="ECO:0007669"/>
    <property type="project" value="UniProtKB-EC"/>
</dbReference>
<dbReference type="GO" id="GO:0046872">
    <property type="term" value="F:metal ion binding"/>
    <property type="evidence" value="ECO:0007669"/>
    <property type="project" value="UniProtKB-KW"/>
</dbReference>
<dbReference type="GO" id="GO:0006284">
    <property type="term" value="P:base-excision repair"/>
    <property type="evidence" value="ECO:0007669"/>
    <property type="project" value="InterPro"/>
</dbReference>
<dbReference type="FunFam" id="1.10.340.30:FF:000009">
    <property type="entry name" value="DNA-3-methyladenine glycosylase I"/>
    <property type="match status" value="1"/>
</dbReference>
<dbReference type="Gene3D" id="1.10.340.30">
    <property type="entry name" value="Hypothetical protein, domain 2"/>
    <property type="match status" value="1"/>
</dbReference>
<dbReference type="InterPro" id="IPR005019">
    <property type="entry name" value="Adenine_glyco"/>
</dbReference>
<dbReference type="InterPro" id="IPR052891">
    <property type="entry name" value="DNA-3mA_glycosylase"/>
</dbReference>
<dbReference type="InterPro" id="IPR011257">
    <property type="entry name" value="DNA_glycosylase"/>
</dbReference>
<dbReference type="InterPro" id="IPR004597">
    <property type="entry name" value="Tag"/>
</dbReference>
<dbReference type="NCBIfam" id="TIGR00624">
    <property type="entry name" value="tag"/>
    <property type="match status" value="1"/>
</dbReference>
<dbReference type="PANTHER" id="PTHR30037">
    <property type="entry name" value="DNA-3-METHYLADENINE GLYCOSYLASE 1"/>
    <property type="match status" value="1"/>
</dbReference>
<dbReference type="PANTHER" id="PTHR30037:SF4">
    <property type="entry name" value="DNA-3-METHYLADENINE GLYCOSYLASE I"/>
    <property type="match status" value="1"/>
</dbReference>
<dbReference type="Pfam" id="PF03352">
    <property type="entry name" value="Adenine_glyco"/>
    <property type="match status" value="1"/>
</dbReference>
<dbReference type="SUPFAM" id="SSF48150">
    <property type="entry name" value="DNA-glycosylase"/>
    <property type="match status" value="1"/>
</dbReference>
<feature type="chain" id="PRO_0000194879" description="DNA-3-methyladenine glycosylase">
    <location>
        <begin position="1"/>
        <end position="185"/>
    </location>
</feature>
<feature type="binding site" evidence="1">
    <location>
        <position position="5"/>
    </location>
    <ligand>
        <name>Zn(2+)</name>
        <dbReference type="ChEBI" id="CHEBI:29105"/>
    </ligand>
</feature>
<feature type="binding site" evidence="1">
    <location>
        <position position="19"/>
    </location>
    <ligand>
        <name>Zn(2+)</name>
        <dbReference type="ChEBI" id="CHEBI:29105"/>
    </ligand>
</feature>
<feature type="binding site" evidence="1">
    <location>
        <position position="176"/>
    </location>
    <ligand>
        <name>Zn(2+)</name>
        <dbReference type="ChEBI" id="CHEBI:29105"/>
    </ligand>
</feature>
<feature type="binding site" evidence="1">
    <location>
        <position position="180"/>
    </location>
    <ligand>
        <name>Zn(2+)</name>
        <dbReference type="ChEBI" id="CHEBI:29105"/>
    </ligand>
</feature>
<keyword id="KW-0227">DNA damage</keyword>
<keyword id="KW-0234">DNA repair</keyword>
<keyword id="KW-0378">Hydrolase</keyword>
<keyword id="KW-0479">Metal-binding</keyword>
<keyword id="KW-1185">Reference proteome</keyword>
<keyword id="KW-0862">Zinc</keyword>
<protein>
    <recommendedName>
        <fullName>DNA-3-methyladenine glycosylase</fullName>
        <ecNumber>3.2.2.20</ecNumber>
    </recommendedName>
    <alternativeName>
        <fullName>3-methyladenine-DNA glycosidase</fullName>
        <shortName>TAG</shortName>
    </alternativeName>
</protein>
<evidence type="ECO:0000250" key="1"/>
<reference key="1">
    <citation type="journal article" date="1995" name="Science">
        <title>Whole-genome random sequencing and assembly of Haemophilus influenzae Rd.</title>
        <authorList>
            <person name="Fleischmann R.D."/>
            <person name="Adams M.D."/>
            <person name="White O."/>
            <person name="Clayton R.A."/>
            <person name="Kirkness E.F."/>
            <person name="Kerlavage A.R."/>
            <person name="Bult C.J."/>
            <person name="Tomb J.-F."/>
            <person name="Dougherty B.A."/>
            <person name="Merrick J.M."/>
            <person name="McKenney K."/>
            <person name="Sutton G.G."/>
            <person name="FitzHugh W."/>
            <person name="Fields C.A."/>
            <person name="Gocayne J.D."/>
            <person name="Scott J.D."/>
            <person name="Shirley R."/>
            <person name="Liu L.-I."/>
            <person name="Glodek A."/>
            <person name="Kelley J.M."/>
            <person name="Weidman J.F."/>
            <person name="Phillips C.A."/>
            <person name="Spriggs T."/>
            <person name="Hedblom E."/>
            <person name="Cotton M.D."/>
            <person name="Utterback T.R."/>
            <person name="Hanna M.C."/>
            <person name="Nguyen D.T."/>
            <person name="Saudek D.M."/>
            <person name="Brandon R.C."/>
            <person name="Fine L.D."/>
            <person name="Fritchman J.L."/>
            <person name="Fuhrmann J.L."/>
            <person name="Geoghagen N.S.M."/>
            <person name="Gnehm C.L."/>
            <person name="McDonald L.A."/>
            <person name="Small K.V."/>
            <person name="Fraser C.M."/>
            <person name="Smith H.O."/>
            <person name="Venter J.C."/>
        </authorList>
    </citation>
    <scope>NUCLEOTIDE SEQUENCE [LARGE SCALE GENOMIC DNA]</scope>
    <source>
        <strain>ATCC 51907 / DSM 11121 / KW20 / Rd</strain>
    </source>
</reference>
<gene>
    <name type="primary">tag</name>
    <name type="ordered locus">HI_0654</name>
</gene>
<comment type="function">
    <text evidence="1">Hydrolysis of the deoxyribose N-glycosidic bond to excise 3-methyladenine from the damaged DNA polymer formed by alkylation lesions.</text>
</comment>
<comment type="catalytic activity">
    <reaction>
        <text>Hydrolysis of alkylated DNA, releasing 3-methyladenine.</text>
        <dbReference type="EC" id="3.2.2.20"/>
    </reaction>
</comment>
<accession>P44321</accession>
<organism>
    <name type="scientific">Haemophilus influenzae (strain ATCC 51907 / DSM 11121 / KW20 / Rd)</name>
    <dbReference type="NCBI Taxonomy" id="71421"/>
    <lineage>
        <taxon>Bacteria</taxon>
        <taxon>Pseudomonadati</taxon>
        <taxon>Pseudomonadota</taxon>
        <taxon>Gammaproteobacteria</taxon>
        <taxon>Pasteurellales</taxon>
        <taxon>Pasteurellaceae</taxon>
        <taxon>Haemophilus</taxon>
    </lineage>
</organism>
<sequence>MTTRCPWVGEQSIYIDYHDKEWGKPEFDSQKLFEKICLEGQQAGLSWITVLKKRESYREAFHQFDPKKIAKMTALDIDACMQNSGLIRHRAKLEAIVKNAKAYLAMEKCGENFSDFIWSFVNHKPIVNDVPDLRSVPTKTEVSKALSKALKKRGFVFIGETTCYAFMQSMGLVDDHLNDCPCKTS</sequence>